<evidence type="ECO:0000250" key="1">
    <source>
        <dbReference type="UniProtKB" id="P04798"/>
    </source>
</evidence>
<evidence type="ECO:0000255" key="2"/>
<evidence type="ECO:0000255" key="3">
    <source>
        <dbReference type="PROSITE-ProRule" id="PRU00498"/>
    </source>
</evidence>
<evidence type="ECO:0000269" key="4">
    <source>
    </source>
</evidence>
<evidence type="ECO:0000303" key="5">
    <source>
    </source>
</evidence>
<evidence type="ECO:0000305" key="6"/>
<evidence type="ECO:0000305" key="7">
    <source>
    </source>
</evidence>
<dbReference type="EC" id="1.-.-.-" evidence="7"/>
<dbReference type="EMBL" id="KC963408">
    <property type="protein sequence ID" value="AGZ20188.1"/>
    <property type="molecule type" value="Genomic_DNA"/>
</dbReference>
<dbReference type="SMR" id="A0A0E3D8K9"/>
<dbReference type="GlyCosmos" id="A0A0E3D8K9">
    <property type="glycosylation" value="1 site, No reported glycans"/>
</dbReference>
<dbReference type="OrthoDB" id="1844152at2759"/>
<dbReference type="GO" id="GO:0016020">
    <property type="term" value="C:membrane"/>
    <property type="evidence" value="ECO:0007669"/>
    <property type="project" value="UniProtKB-SubCell"/>
</dbReference>
<dbReference type="GO" id="GO:0020037">
    <property type="term" value="F:heme binding"/>
    <property type="evidence" value="ECO:0007669"/>
    <property type="project" value="InterPro"/>
</dbReference>
<dbReference type="GO" id="GO:0005506">
    <property type="term" value="F:iron ion binding"/>
    <property type="evidence" value="ECO:0007669"/>
    <property type="project" value="InterPro"/>
</dbReference>
<dbReference type="GO" id="GO:0004497">
    <property type="term" value="F:monooxygenase activity"/>
    <property type="evidence" value="ECO:0007669"/>
    <property type="project" value="UniProtKB-KW"/>
</dbReference>
<dbReference type="GO" id="GO:0016705">
    <property type="term" value="F:oxidoreductase activity, acting on paired donors, with incorporation or reduction of molecular oxygen"/>
    <property type="evidence" value="ECO:0007669"/>
    <property type="project" value="InterPro"/>
</dbReference>
<dbReference type="GO" id="GO:0043386">
    <property type="term" value="P:mycotoxin biosynthetic process"/>
    <property type="evidence" value="ECO:0007669"/>
    <property type="project" value="UniProtKB-ARBA"/>
</dbReference>
<dbReference type="CDD" id="cd11041">
    <property type="entry name" value="CYP503A1-like"/>
    <property type="match status" value="1"/>
</dbReference>
<dbReference type="Gene3D" id="1.10.630.10">
    <property type="entry name" value="Cytochrome P450"/>
    <property type="match status" value="1"/>
</dbReference>
<dbReference type="InterPro" id="IPR001128">
    <property type="entry name" value="Cyt_P450"/>
</dbReference>
<dbReference type="InterPro" id="IPR002403">
    <property type="entry name" value="Cyt_P450_E_grp-IV"/>
</dbReference>
<dbReference type="InterPro" id="IPR036396">
    <property type="entry name" value="Cyt_P450_sf"/>
</dbReference>
<dbReference type="PANTHER" id="PTHR46206">
    <property type="entry name" value="CYTOCHROME P450"/>
    <property type="match status" value="1"/>
</dbReference>
<dbReference type="PANTHER" id="PTHR46206:SF7">
    <property type="entry name" value="P450, PUTATIVE (EUROFUNG)-RELATED"/>
    <property type="match status" value="1"/>
</dbReference>
<dbReference type="Pfam" id="PF00067">
    <property type="entry name" value="p450"/>
    <property type="match status" value="1"/>
</dbReference>
<dbReference type="PRINTS" id="PR00465">
    <property type="entry name" value="EP450IV"/>
</dbReference>
<dbReference type="SUPFAM" id="SSF48264">
    <property type="entry name" value="Cytochrome P450"/>
    <property type="match status" value="1"/>
</dbReference>
<sequence>MTVMVSRIEYIGQIVRGEATVIWILVALVLVAYLILPNPTYRTNVKVPTVRYLGGWMPDLVDRLFFNTKATSVIYDGYKQYKKKAYKVLKADGDLVVLSTRYAEELRQLPASTLNALEATFTDHVGDYTTILTDSHLHTETIQKRLTPAIGRLIPRIISELDHAYEVEFPKCDGKWVAINPYEVFLRLVARVGARIFIGDTLCRDEQWLKASIDYTKNIFVTIALLRPVPGFLQPLVGRVLPSSRSLNHQLAYIKNEFLGPLIEKRREMESSGDPNYEKPDDFLQWMMDLAKTEQESHPHNLAQRLLGITSMAVVHTSAMSLTHILYDLLVMPQWLQPLRDEIQEVNPDWHSTTQAHLIGLKGMDSFLKESQRFNPPGELSFHRVVKHDLTLSDGLFLPKGTHICMAAGPISRDADVMSDPDTFDAFRFVKENRPTSGFVSTGATNMHFGLGRYACPGRFFAAFVMKAILSRFLADYDFRFGPDQKDRPKNMMIGDKIVPNVSTPIFIRKRTTSKPL</sequence>
<protein>
    <recommendedName>
        <fullName evidence="5">Cytochrome P450 monooxygenase penP</fullName>
        <ecNumber evidence="7">1.-.-.-</ecNumber>
    </recommendedName>
    <alternativeName>
        <fullName evidence="5">Penitrem biosynthesis cluster protein P</fullName>
    </alternativeName>
</protein>
<reference key="1">
    <citation type="journal article" date="2015" name="Toxins">
        <title>Molecular cloning and functional analysis of gene clusters for the biosynthesis of indole-diterpenes in Penicillium crustosum and P. janthinellum.</title>
        <authorList>
            <person name="Nicholson M.J."/>
            <person name="Eaton C.J."/>
            <person name="Starkel C."/>
            <person name="Tapper B.A."/>
            <person name="Cox M.P."/>
            <person name="Scott B."/>
        </authorList>
    </citation>
    <scope>NUCLEOTIDE SEQUENCE [GENOMIC DNA]</scope>
    <scope>IDENTIFICATION</scope>
    <scope>FUNCTION</scope>
    <scope>DISRUPTION PHENOTYPE</scope>
    <scope>PATHWAY</scope>
    <source>
        <strain>PN2402</strain>
    </source>
</reference>
<feature type="chain" id="PRO_0000446572" description="Cytochrome P450 monooxygenase penP">
    <location>
        <begin position="1"/>
        <end position="517"/>
    </location>
</feature>
<feature type="transmembrane region" description="Helical" evidence="2">
    <location>
        <begin position="17"/>
        <end position="37"/>
    </location>
</feature>
<feature type="binding site" description="axial binding residue" evidence="1">
    <location>
        <position position="456"/>
    </location>
    <ligand>
        <name>heme</name>
        <dbReference type="ChEBI" id="CHEBI:30413"/>
    </ligand>
    <ligandPart>
        <name>Fe</name>
        <dbReference type="ChEBI" id="CHEBI:18248"/>
    </ligandPart>
</feature>
<feature type="glycosylation site" description="N-linked (GlcNAc...) asparagine" evidence="3">
    <location>
        <position position="501"/>
    </location>
</feature>
<comment type="function">
    <text evidence="4 7">Cytochrome P450 monooxygenase; part of the gene cluster that mediates the biosynthesis of the indole diterpenes penitrems (PubMed:26213965). The geranylgeranyl diphosphate (GGPP) synthase penG catalyzes the first step in penitrem biosynthesis via conversion of farnesyl pyrophosphate and isopentyl pyrophosphate into geranylgeranyl pyrophosphate (GGPP) (Probable). Condensation of indole-3-glycerol phosphate with GGPP by the prenyl transferase penC then forms 3-geranylgeranylindole (3-GGI) (Probable). Epoxidation by the FAD-dependent monooxygenase penM leads to a epoxidized-GGI that is substrate of the terpene cyclase penB for cyclization to yield paspaline (Probable). Paspaline is subsequently converted to 13-desoxypaxilline by the cytochrome P450 monooxygenase penP, the latter being then converted to paxilline by the cytochrome P450 monooxygenase penQ (PubMed:26213965). Paxilline is converted to beta-paxitriol via C-10 ketoreduction by the short-chain dehydrogenase PC-15 which can be monoprenylated at the C-20 by the indole diterpene prenyltransferase penD (Probable). A two-step elimination (acetylation and elimination) process performed by the O-acetyltransferase PC-16 and the P.simplicissimum ptmI-ortholog not yet identified in P.crustosum, leads to the production of the prenylated form of penijanthine (Probable). The FAD-linked oxidoreductase ptmO then converts the prenylated form of penijanthine into PC-M5 which is in turn transformed into PC-M4 by the aromatic dimethylallyltransferase PC-22 (Probable). A series of oxidation steps involving 4 cytochrome P450 monooxygenases (PC-21, PC-05, PC-23, PC-20) and a FAD-dependent monooxygenase (PC-14) are required for the transformation of PC-M4 to penitrems A and E. Synthesis of these final products is proposed to proceed via penitrems D and C (PC-21, PC-05, PC-14) and penitrems B and F (PC-21, PC-05, PC-14, PC-23) (Probable).</text>
</comment>
<comment type="cofactor">
    <cofactor evidence="1">
        <name>heme</name>
        <dbReference type="ChEBI" id="CHEBI:30413"/>
    </cofactor>
</comment>
<comment type="pathway">
    <text evidence="7">Secondary metabolite biosynthesis.</text>
</comment>
<comment type="pathway">
    <text evidence="4">Secondary metabolite biosynthesis.</text>
</comment>
<comment type="subcellular location">
    <subcellularLocation>
        <location evidence="2">Membrane</location>
        <topology evidence="2">Single-pass membrane protein</topology>
    </subcellularLocation>
</comment>
<comment type="disruption phenotype">
    <text evidence="4">Abolishes the production of penitrems A, B, D, E, and F as well as of 13-desoxypaxilline, but accumulates the early pathway intermediate paspaline.</text>
</comment>
<comment type="similarity">
    <text evidence="6">Belongs to the cytochrome P450 family.</text>
</comment>
<proteinExistence type="inferred from homology"/>
<name>PENP_PENCR</name>
<accession>A0A0E3D8K9</accession>
<gene>
    <name evidence="5" type="primary">penP</name>
</gene>
<organism>
    <name type="scientific">Penicillium crustosum</name>
    <name type="common">Blue mold fungus</name>
    <dbReference type="NCBI Taxonomy" id="36656"/>
    <lineage>
        <taxon>Eukaryota</taxon>
        <taxon>Fungi</taxon>
        <taxon>Dikarya</taxon>
        <taxon>Ascomycota</taxon>
        <taxon>Pezizomycotina</taxon>
        <taxon>Eurotiomycetes</taxon>
        <taxon>Eurotiomycetidae</taxon>
        <taxon>Eurotiales</taxon>
        <taxon>Aspergillaceae</taxon>
        <taxon>Penicillium</taxon>
    </lineage>
</organism>
<keyword id="KW-0325">Glycoprotein</keyword>
<keyword id="KW-0408">Iron</keyword>
<keyword id="KW-0472">Membrane</keyword>
<keyword id="KW-0479">Metal-binding</keyword>
<keyword id="KW-0503">Monooxygenase</keyword>
<keyword id="KW-0560">Oxidoreductase</keyword>
<keyword id="KW-0812">Transmembrane</keyword>
<keyword id="KW-1133">Transmembrane helix</keyword>